<evidence type="ECO:0000250" key="1"/>
<evidence type="ECO:0000305" key="2"/>
<dbReference type="EMBL" id="AE016816">
    <property type="protein sequence ID" value="AAS51363.2"/>
    <property type="molecule type" value="Genomic_DNA"/>
</dbReference>
<dbReference type="RefSeq" id="NP_983539.2">
    <property type="nucleotide sequence ID" value="NM_208892.2"/>
</dbReference>
<dbReference type="SMR" id="Q75BY3"/>
<dbReference type="FunCoup" id="Q75BY3">
    <property type="interactions" value="1037"/>
</dbReference>
<dbReference type="STRING" id="284811.Q75BY3"/>
<dbReference type="EnsemblFungi" id="AAS51363">
    <property type="protein sequence ID" value="AAS51363"/>
    <property type="gene ID" value="AGOS_ACR137W"/>
</dbReference>
<dbReference type="GeneID" id="4619671"/>
<dbReference type="KEGG" id="ago:AGOS_ACR137W"/>
<dbReference type="eggNOG" id="KOG0285">
    <property type="taxonomic scope" value="Eukaryota"/>
</dbReference>
<dbReference type="HOGENOM" id="CLU_000288_72_0_1"/>
<dbReference type="InParanoid" id="Q75BY3"/>
<dbReference type="OMA" id="FAMCFDQ"/>
<dbReference type="OrthoDB" id="10256122at2759"/>
<dbReference type="Proteomes" id="UP000000591">
    <property type="component" value="Chromosome III"/>
</dbReference>
<dbReference type="GO" id="GO:0071013">
    <property type="term" value="C:catalytic step 2 spliceosome"/>
    <property type="evidence" value="ECO:0000318"/>
    <property type="project" value="GO_Central"/>
</dbReference>
<dbReference type="GO" id="GO:0005737">
    <property type="term" value="C:cytoplasm"/>
    <property type="evidence" value="ECO:0007669"/>
    <property type="project" value="UniProtKB-SubCell"/>
</dbReference>
<dbReference type="GO" id="GO:0071014">
    <property type="term" value="C:post-mRNA release spliceosomal complex"/>
    <property type="evidence" value="ECO:0007669"/>
    <property type="project" value="EnsemblFungi"/>
</dbReference>
<dbReference type="GO" id="GO:0000974">
    <property type="term" value="C:Prp19 complex"/>
    <property type="evidence" value="ECO:0000318"/>
    <property type="project" value="GO_Central"/>
</dbReference>
<dbReference type="GO" id="GO:0045292">
    <property type="term" value="P:mRNA cis splicing, via spliceosome"/>
    <property type="evidence" value="ECO:0007669"/>
    <property type="project" value="EnsemblFungi"/>
</dbReference>
<dbReference type="GO" id="GO:0000398">
    <property type="term" value="P:mRNA splicing, via spliceosome"/>
    <property type="evidence" value="ECO:0000318"/>
    <property type="project" value="GO_Central"/>
</dbReference>
<dbReference type="CDD" id="cd00200">
    <property type="entry name" value="WD40"/>
    <property type="match status" value="1"/>
</dbReference>
<dbReference type="FunFam" id="2.130.10.10:FF:000012">
    <property type="entry name" value="Putative pleiotropic regulator 1"/>
    <property type="match status" value="1"/>
</dbReference>
<dbReference type="Gene3D" id="2.130.10.10">
    <property type="entry name" value="YVTN repeat-like/Quinoprotein amine dehydrogenase"/>
    <property type="match status" value="1"/>
</dbReference>
<dbReference type="InterPro" id="IPR020472">
    <property type="entry name" value="G-protein_beta_WD-40_rep"/>
</dbReference>
<dbReference type="InterPro" id="IPR045241">
    <property type="entry name" value="Prp46/PLRG1-like"/>
</dbReference>
<dbReference type="InterPro" id="IPR015943">
    <property type="entry name" value="WD40/YVTN_repeat-like_dom_sf"/>
</dbReference>
<dbReference type="InterPro" id="IPR019775">
    <property type="entry name" value="WD40_repeat_CS"/>
</dbReference>
<dbReference type="InterPro" id="IPR036322">
    <property type="entry name" value="WD40_repeat_dom_sf"/>
</dbReference>
<dbReference type="InterPro" id="IPR001680">
    <property type="entry name" value="WD40_rpt"/>
</dbReference>
<dbReference type="PANTHER" id="PTHR19923:SF0">
    <property type="entry name" value="PLEIOTROPIC REGULATOR 1"/>
    <property type="match status" value="1"/>
</dbReference>
<dbReference type="PANTHER" id="PTHR19923">
    <property type="entry name" value="WD40 REPEAT PROTEINPRL1/PRL2-RELATED"/>
    <property type="match status" value="1"/>
</dbReference>
<dbReference type="Pfam" id="PF00400">
    <property type="entry name" value="WD40"/>
    <property type="match status" value="6"/>
</dbReference>
<dbReference type="PRINTS" id="PR00320">
    <property type="entry name" value="GPROTEINBRPT"/>
</dbReference>
<dbReference type="SMART" id="SM00320">
    <property type="entry name" value="WD40"/>
    <property type="match status" value="7"/>
</dbReference>
<dbReference type="SUPFAM" id="SSF50978">
    <property type="entry name" value="WD40 repeat-like"/>
    <property type="match status" value="1"/>
</dbReference>
<dbReference type="PROSITE" id="PS00678">
    <property type="entry name" value="WD_REPEATS_1"/>
    <property type="match status" value="2"/>
</dbReference>
<dbReference type="PROSITE" id="PS50082">
    <property type="entry name" value="WD_REPEATS_2"/>
    <property type="match status" value="4"/>
</dbReference>
<dbReference type="PROSITE" id="PS50294">
    <property type="entry name" value="WD_REPEATS_REGION"/>
    <property type="match status" value="1"/>
</dbReference>
<comment type="function">
    <text evidence="1">Involved in pre-mRNA splicing and required for cell cycle progression at G2/M.</text>
</comment>
<comment type="subunit">
    <text evidence="1">Associated with the spliceosome.</text>
</comment>
<comment type="subcellular location">
    <subcellularLocation>
        <location evidence="1">Cytoplasm</location>
    </subcellularLocation>
    <subcellularLocation>
        <location evidence="1">Nucleus</location>
    </subcellularLocation>
</comment>
<comment type="similarity">
    <text evidence="2">Belongs to the WD repeat PRL1/PRL2 family.</text>
</comment>
<sequence length="425" mass="48021">MNEHSDDVYVRARLRNQFGYMTWVPEYVEDRISSKKGILQRYEDYQQKQAKAQEVKTDSLVKYEGAKDVPRNLLRIYRGEADTSALARYEEVVSQKPQWHAPWKLTRVINGHTGWVRCVCVDPVDNAWFATGSNDSTIRVWDLATGKLKVTLQGHIMTVRDICISARHPYMFSASQDKLVKCWDLERNTVVRDFHGTLSGVHSVDLHPSLDLIVSAGRDSVVRVWDIRSRSCVLTLAGHRGPINKVRCLPVDPQIVSCSTDATVKLWDLVAGKPMKTLTHHKRNVRDLAFNPTEFSFASACTDDIRSWKLVDGQLLTNFNSEALGIVNTLACNQDGVLFAGGDTGELSFFDYKTGHKFQKLETTAMPGSLESEKGVLASTFDRTGLRLLTCERDKSIKIWKHIDGATQDSHPGLPWNPSLVRQRF</sequence>
<gene>
    <name type="primary">PRP46</name>
    <name type="ordered locus">ACR137W</name>
</gene>
<keyword id="KW-0963">Cytoplasm</keyword>
<keyword id="KW-0507">mRNA processing</keyword>
<keyword id="KW-0508">mRNA splicing</keyword>
<keyword id="KW-0539">Nucleus</keyword>
<keyword id="KW-1185">Reference proteome</keyword>
<keyword id="KW-0677">Repeat</keyword>
<keyword id="KW-0747">Spliceosome</keyword>
<keyword id="KW-0853">WD repeat</keyword>
<feature type="chain" id="PRO_0000051159" description="Pre-mRNA-splicing factor PRP46">
    <location>
        <begin position="1"/>
        <end position="425"/>
    </location>
</feature>
<feature type="repeat" description="WD 1">
    <location>
        <begin position="111"/>
        <end position="151"/>
    </location>
</feature>
<feature type="repeat" description="WD 2">
    <location>
        <begin position="154"/>
        <end position="193"/>
    </location>
</feature>
<feature type="repeat" description="WD 3">
    <location>
        <begin position="196"/>
        <end position="235"/>
    </location>
</feature>
<feature type="repeat" description="WD 4">
    <location>
        <begin position="238"/>
        <end position="279"/>
    </location>
</feature>
<feature type="repeat" description="WD 5">
    <location>
        <begin position="281"/>
        <end position="320"/>
    </location>
</feature>
<feature type="repeat" description="WD 6">
    <location>
        <begin position="322"/>
        <end position="360"/>
    </location>
</feature>
<feature type="repeat" description="WD 7">
    <location>
        <begin position="371"/>
        <end position="410"/>
    </location>
</feature>
<organism>
    <name type="scientific">Eremothecium gossypii (strain ATCC 10895 / CBS 109.51 / FGSC 9923 / NRRL Y-1056)</name>
    <name type="common">Yeast</name>
    <name type="synonym">Ashbya gossypii</name>
    <dbReference type="NCBI Taxonomy" id="284811"/>
    <lineage>
        <taxon>Eukaryota</taxon>
        <taxon>Fungi</taxon>
        <taxon>Dikarya</taxon>
        <taxon>Ascomycota</taxon>
        <taxon>Saccharomycotina</taxon>
        <taxon>Saccharomycetes</taxon>
        <taxon>Saccharomycetales</taxon>
        <taxon>Saccharomycetaceae</taxon>
        <taxon>Eremothecium</taxon>
    </lineage>
</organism>
<proteinExistence type="inferred from homology"/>
<accession>Q75BY3</accession>
<protein>
    <recommendedName>
        <fullName>Pre-mRNA-splicing factor PRP46</fullName>
    </recommendedName>
    <alternativeName>
        <fullName>Pre-mRNA-processing protein 46</fullName>
    </alternativeName>
</protein>
<name>PRP46_EREGS</name>
<reference key="1">
    <citation type="journal article" date="2004" name="Science">
        <title>The Ashbya gossypii genome as a tool for mapping the ancient Saccharomyces cerevisiae genome.</title>
        <authorList>
            <person name="Dietrich F.S."/>
            <person name="Voegeli S."/>
            <person name="Brachat S."/>
            <person name="Lerch A."/>
            <person name="Gates K."/>
            <person name="Steiner S."/>
            <person name="Mohr C."/>
            <person name="Poehlmann R."/>
            <person name="Luedi P."/>
            <person name="Choi S."/>
            <person name="Wing R.A."/>
            <person name="Flavier A."/>
            <person name="Gaffney T.D."/>
            <person name="Philippsen P."/>
        </authorList>
    </citation>
    <scope>NUCLEOTIDE SEQUENCE [LARGE SCALE GENOMIC DNA]</scope>
    <source>
        <strain>ATCC 10895 / CBS 109.51 / FGSC 9923 / NRRL Y-1056</strain>
    </source>
</reference>
<reference key="2">
    <citation type="journal article" date="2013" name="G3 (Bethesda)">
        <title>Genomes of Ashbya fungi isolated from insects reveal four mating-type loci, numerous translocations, lack of transposons, and distinct gene duplications.</title>
        <authorList>
            <person name="Dietrich F.S."/>
            <person name="Voegeli S."/>
            <person name="Kuo S."/>
            <person name="Philippsen P."/>
        </authorList>
    </citation>
    <scope>GENOME REANNOTATION</scope>
    <scope>SEQUENCE REVISION TO 64 AND 79</scope>
    <source>
        <strain>ATCC 10895 / CBS 109.51 / FGSC 9923 / NRRL Y-1056</strain>
    </source>
</reference>